<evidence type="ECO:0000250" key="1">
    <source>
        <dbReference type="UniProtKB" id="Q42578"/>
    </source>
</evidence>
<evidence type="ECO:0000255" key="2"/>
<evidence type="ECO:0000255" key="3">
    <source>
        <dbReference type="PROSITE-ProRule" id="PRU00297"/>
    </source>
</evidence>
<evidence type="ECO:0000269" key="4">
    <source>
    </source>
</evidence>
<evidence type="ECO:0000305" key="5"/>
<evidence type="ECO:0007829" key="6">
    <source>
        <dbReference type="PDB" id="1QGJ"/>
    </source>
</evidence>
<keyword id="KW-0002">3D-structure</keyword>
<keyword id="KW-0106">Calcium</keyword>
<keyword id="KW-1015">Disulfide bond</keyword>
<keyword id="KW-0325">Glycoprotein</keyword>
<keyword id="KW-0349">Heme</keyword>
<keyword id="KW-0376">Hydrogen peroxide</keyword>
<keyword id="KW-0408">Iron</keyword>
<keyword id="KW-0479">Metal-binding</keyword>
<keyword id="KW-0560">Oxidoreductase</keyword>
<keyword id="KW-0575">Peroxidase</keyword>
<keyword id="KW-0873">Pyrrolidone carboxylic acid</keyword>
<keyword id="KW-1185">Reference proteome</keyword>
<keyword id="KW-0964">Secreted</keyword>
<keyword id="KW-0732">Signal</keyword>
<organism>
    <name type="scientific">Arabidopsis thaliana</name>
    <name type="common">Mouse-ear cress</name>
    <dbReference type="NCBI Taxonomy" id="3702"/>
    <lineage>
        <taxon>Eukaryota</taxon>
        <taxon>Viridiplantae</taxon>
        <taxon>Streptophyta</taxon>
        <taxon>Embryophyta</taxon>
        <taxon>Tracheophyta</taxon>
        <taxon>Spermatophyta</taxon>
        <taxon>Magnoliopsida</taxon>
        <taxon>eudicotyledons</taxon>
        <taxon>Gunneridae</taxon>
        <taxon>Pentapetalae</taxon>
        <taxon>rosids</taxon>
        <taxon>malvids</taxon>
        <taxon>Brassicales</taxon>
        <taxon>Brassicaceae</taxon>
        <taxon>Camelineae</taxon>
        <taxon>Arabidopsis</taxon>
    </lineage>
</organism>
<feature type="signal peptide" evidence="2">
    <location>
        <begin position="1"/>
        <end position="28"/>
    </location>
</feature>
<feature type="chain" id="PRO_0000023724" description="Peroxidase 59">
    <location>
        <begin position="29"/>
        <end position="328"/>
    </location>
</feature>
<feature type="active site" description="Proton acceptor">
    <location>
        <position position="70"/>
    </location>
</feature>
<feature type="binding site" evidence="3 4">
    <location>
        <position position="71"/>
    </location>
    <ligand>
        <name>Ca(2+)</name>
        <dbReference type="ChEBI" id="CHEBI:29108"/>
        <label>1</label>
    </ligand>
</feature>
<feature type="binding site" evidence="3 4">
    <location>
        <position position="74"/>
    </location>
    <ligand>
        <name>Ca(2+)</name>
        <dbReference type="ChEBI" id="CHEBI:29108"/>
        <label>1</label>
    </ligand>
</feature>
<feature type="binding site" evidence="3 4">
    <location>
        <position position="76"/>
    </location>
    <ligand>
        <name>Ca(2+)</name>
        <dbReference type="ChEBI" id="CHEBI:29108"/>
        <label>1</label>
    </ligand>
</feature>
<feature type="binding site" evidence="3 4">
    <location>
        <position position="78"/>
    </location>
    <ligand>
        <name>Ca(2+)</name>
        <dbReference type="ChEBI" id="CHEBI:29108"/>
        <label>1</label>
    </ligand>
</feature>
<feature type="binding site" evidence="3 4">
    <location>
        <position position="80"/>
    </location>
    <ligand>
        <name>Ca(2+)</name>
        <dbReference type="ChEBI" id="CHEBI:29108"/>
        <label>1</label>
    </ligand>
</feature>
<feature type="binding site">
    <location>
        <position position="163"/>
    </location>
    <ligand>
        <name>substrate</name>
    </ligand>
</feature>
<feature type="binding site" description="axial binding residue">
    <location>
        <position position="193"/>
    </location>
    <ligand>
        <name>heme b</name>
        <dbReference type="ChEBI" id="CHEBI:60344"/>
    </ligand>
    <ligandPart>
        <name>Fe</name>
        <dbReference type="ChEBI" id="CHEBI:18248"/>
    </ligandPart>
</feature>
<feature type="binding site" evidence="3 4">
    <location>
        <position position="194"/>
    </location>
    <ligand>
        <name>Ca(2+)</name>
        <dbReference type="ChEBI" id="CHEBI:29108"/>
        <label>2</label>
    </ligand>
</feature>
<feature type="binding site" evidence="3 4">
    <location>
        <position position="245"/>
    </location>
    <ligand>
        <name>Ca(2+)</name>
        <dbReference type="ChEBI" id="CHEBI:29108"/>
        <label>2</label>
    </ligand>
</feature>
<feature type="binding site" evidence="3 4">
    <location>
        <position position="248"/>
    </location>
    <ligand>
        <name>Ca(2+)</name>
        <dbReference type="ChEBI" id="CHEBI:29108"/>
        <label>2</label>
    </ligand>
</feature>
<feature type="binding site" evidence="3 4">
    <location>
        <position position="251"/>
    </location>
    <ligand>
        <name>Ca(2+)</name>
        <dbReference type="ChEBI" id="CHEBI:29108"/>
        <label>2</label>
    </ligand>
</feature>
<feature type="binding site" evidence="3 4">
    <location>
        <position position="253"/>
    </location>
    <ligand>
        <name>Ca(2+)</name>
        <dbReference type="ChEBI" id="CHEBI:29108"/>
        <label>2</label>
    </ligand>
</feature>
<feature type="site" description="Transition state stabilizer">
    <location>
        <position position="66"/>
    </location>
</feature>
<feature type="modified residue" description="Pyrrolidone carboxylic acid" evidence="1 3">
    <location>
        <position position="29"/>
    </location>
</feature>
<feature type="glycosylation site" description="N-linked (GlcNAc...) asparagine" evidence="2">
    <location>
        <position position="182"/>
    </location>
</feature>
<feature type="glycosylation site" description="N-linked (GlcNAc...) asparagine" evidence="2">
    <location>
        <position position="209"/>
    </location>
</feature>
<feature type="glycosylation site" description="N-linked (GlcNAc...) asparagine" evidence="2">
    <location>
        <position position="239"/>
    </location>
</feature>
<feature type="glycosylation site" description="N-linked (GlcNAc...) asparagine" evidence="2">
    <location>
        <position position="281"/>
    </location>
</feature>
<feature type="glycosylation site" description="N-linked (GlcNAc...) asparagine" evidence="2">
    <location>
        <position position="310"/>
    </location>
</feature>
<feature type="disulfide bond" evidence="3 4">
    <location>
        <begin position="39"/>
        <end position="116"/>
    </location>
</feature>
<feature type="disulfide bond" evidence="3 4">
    <location>
        <begin position="72"/>
        <end position="77"/>
    </location>
</feature>
<feature type="disulfide bond" evidence="3 4">
    <location>
        <begin position="122"/>
        <end position="323"/>
    </location>
</feature>
<feature type="disulfide bond" evidence="3 4">
    <location>
        <begin position="200"/>
        <end position="232"/>
    </location>
</feature>
<feature type="sequence conflict" description="In Ref. 5; AAM65571." evidence="5" ref="5">
    <original>T</original>
    <variation>R</variation>
    <location>
        <position position="3"/>
    </location>
</feature>
<feature type="sequence conflict" description="In Ref. 1 and 5." evidence="5" ref="1 5">
    <original>L</original>
    <variation>A</variation>
    <location>
        <position position="213"/>
    </location>
</feature>
<feature type="turn" evidence="6">
    <location>
        <begin position="32"/>
        <end position="38"/>
    </location>
</feature>
<feature type="helix" evidence="6">
    <location>
        <begin position="42"/>
        <end position="56"/>
    </location>
</feature>
<feature type="helix" evidence="6">
    <location>
        <begin position="60"/>
        <end position="72"/>
    </location>
</feature>
<feature type="turn" evidence="6">
    <location>
        <begin position="73"/>
        <end position="75"/>
    </location>
</feature>
<feature type="strand" evidence="6">
    <location>
        <begin position="76"/>
        <end position="79"/>
    </location>
</feature>
<feature type="helix" evidence="6">
    <location>
        <begin position="80"/>
        <end position="82"/>
    </location>
</feature>
<feature type="helix" evidence="6">
    <location>
        <begin position="89"/>
        <end position="91"/>
    </location>
</feature>
<feature type="turn" evidence="6">
    <location>
        <begin position="93"/>
        <end position="98"/>
    </location>
</feature>
<feature type="helix" evidence="6">
    <location>
        <begin position="102"/>
        <end position="115"/>
    </location>
</feature>
<feature type="turn" evidence="6">
    <location>
        <begin position="117"/>
        <end position="119"/>
    </location>
</feature>
<feature type="helix" evidence="6">
    <location>
        <begin position="122"/>
        <end position="135"/>
    </location>
</feature>
<feature type="turn" evidence="6">
    <location>
        <begin position="136"/>
        <end position="138"/>
    </location>
</feature>
<feature type="helix" evidence="6">
    <location>
        <begin position="156"/>
        <end position="159"/>
    </location>
</feature>
<feature type="helix" evidence="6">
    <location>
        <begin position="169"/>
        <end position="177"/>
    </location>
</feature>
<feature type="turn" evidence="6">
    <location>
        <begin position="178"/>
        <end position="180"/>
    </location>
</feature>
<feature type="helix" evidence="6">
    <location>
        <begin position="183"/>
        <end position="190"/>
    </location>
</feature>
<feature type="helix" evidence="6">
    <location>
        <begin position="191"/>
        <end position="194"/>
    </location>
</feature>
<feature type="strand" evidence="6">
    <location>
        <begin position="195"/>
        <end position="199"/>
    </location>
</feature>
<feature type="helix" evidence="6">
    <location>
        <begin position="200"/>
        <end position="202"/>
    </location>
</feature>
<feature type="helix" evidence="6">
    <location>
        <begin position="204"/>
        <end position="206"/>
    </location>
</feature>
<feature type="strand" evidence="6">
    <location>
        <begin position="210"/>
        <end position="214"/>
    </location>
</feature>
<feature type="helix" evidence="6">
    <location>
        <begin position="222"/>
        <end position="231"/>
    </location>
</feature>
<feature type="strand" evidence="6">
    <location>
        <begin position="241"/>
        <end position="247"/>
    </location>
</feature>
<feature type="strand" evidence="6">
    <location>
        <begin position="249"/>
        <end position="251"/>
    </location>
</feature>
<feature type="helix" evidence="6">
    <location>
        <begin position="255"/>
        <end position="261"/>
    </location>
</feature>
<feature type="helix" evidence="6">
    <location>
        <begin position="268"/>
        <end position="275"/>
    </location>
</feature>
<feature type="turn" evidence="6">
    <location>
        <begin position="277"/>
        <end position="283"/>
    </location>
</feature>
<feature type="helix" evidence="6">
    <location>
        <begin position="284"/>
        <end position="292"/>
    </location>
</feature>
<feature type="helix" evidence="6">
    <location>
        <begin position="294"/>
        <end position="308"/>
    </location>
</feature>
<comment type="function">
    <text>Removal of H(2)O(2), oxidation of toxic reductants, biosynthesis and degradation of lignin, suberization, auxin catabolism, response to environmental stresses such as wounding, pathogen attack and oxidative stress. These functions might be dependent on each isozyme/isoform in each plant tissue.</text>
</comment>
<comment type="catalytic activity">
    <reaction>
        <text>2 a phenolic donor + H2O2 = 2 a phenolic radical donor + 2 H2O</text>
        <dbReference type="Rhea" id="RHEA:56136"/>
        <dbReference type="ChEBI" id="CHEBI:15377"/>
        <dbReference type="ChEBI" id="CHEBI:16240"/>
        <dbReference type="ChEBI" id="CHEBI:139520"/>
        <dbReference type="ChEBI" id="CHEBI:139521"/>
        <dbReference type="EC" id="1.11.1.7"/>
    </reaction>
</comment>
<comment type="cofactor">
    <cofactor>
        <name>heme b</name>
        <dbReference type="ChEBI" id="CHEBI:60344"/>
    </cofactor>
    <text>Binds 1 heme b (iron(II)-protoporphyrin IX) group per subunit.</text>
</comment>
<comment type="cofactor">
    <cofactor>
        <name>Ca(2+)</name>
        <dbReference type="ChEBI" id="CHEBI:29108"/>
    </cofactor>
    <text>Binds 2 calcium ions per subunit.</text>
</comment>
<comment type="subcellular location">
    <subcellularLocation>
        <location evidence="3">Secreted</location>
    </subcellularLocation>
</comment>
<comment type="tissue specificity">
    <text>Slightly expressed in roots.</text>
</comment>
<comment type="miscellaneous">
    <text>There are 73 peroxidase genes in A.thaliana.</text>
</comment>
<comment type="similarity">
    <text evidence="3">Belongs to the peroxidase family. Classical plant (class III) peroxidase subfamily.</text>
</comment>
<dbReference type="EC" id="1.11.1.7"/>
<dbReference type="EMBL" id="X98453">
    <property type="protein sequence ID" value="CAA67092.1"/>
    <property type="molecule type" value="mRNA"/>
</dbReference>
<dbReference type="EMBL" id="AF296836">
    <property type="status" value="NOT_ANNOTATED_CDS"/>
    <property type="molecule type" value="Genomic_DNA"/>
</dbReference>
<dbReference type="EMBL" id="CP002688">
    <property type="protein sequence ID" value="AED92762.1"/>
    <property type="molecule type" value="Genomic_DNA"/>
</dbReference>
<dbReference type="EMBL" id="AY123985">
    <property type="protein sequence ID" value="AAM74498.1"/>
    <property type="molecule type" value="mRNA"/>
</dbReference>
<dbReference type="EMBL" id="BT000582">
    <property type="protein sequence ID" value="AAN18151.1"/>
    <property type="molecule type" value="mRNA"/>
</dbReference>
<dbReference type="EMBL" id="AY088025">
    <property type="protein sequence ID" value="AAM65571.1"/>
    <property type="molecule type" value="mRNA"/>
</dbReference>
<dbReference type="RefSeq" id="NP_568385.1">
    <property type="nucleotide sequence ID" value="NM_121996.3"/>
</dbReference>
<dbReference type="PDB" id="1QGJ">
    <property type="method" value="X-ray"/>
    <property type="resolution" value="1.90 A"/>
    <property type="chains" value="A/B=29-328"/>
</dbReference>
<dbReference type="PDBsum" id="1QGJ"/>
<dbReference type="SMR" id="Q39034"/>
<dbReference type="BioGRID" id="17387">
    <property type="interactions" value="1"/>
</dbReference>
<dbReference type="FunCoup" id="Q39034">
    <property type="interactions" value="320"/>
</dbReference>
<dbReference type="STRING" id="3702.Q39034"/>
<dbReference type="PeroxiBase" id="225">
    <property type="entry name" value="AtPrx59"/>
</dbReference>
<dbReference type="GlyCosmos" id="Q39034">
    <property type="glycosylation" value="5 sites, No reported glycans"/>
</dbReference>
<dbReference type="GlyGen" id="Q39034">
    <property type="glycosylation" value="5 sites"/>
</dbReference>
<dbReference type="PaxDb" id="3702-AT5G19890.1"/>
<dbReference type="ProteomicsDB" id="236403"/>
<dbReference type="EnsemblPlants" id="AT5G19890.1">
    <property type="protein sequence ID" value="AT5G19890.1"/>
    <property type="gene ID" value="AT5G19890"/>
</dbReference>
<dbReference type="GeneID" id="832111"/>
<dbReference type="Gramene" id="AT5G19890.1">
    <property type="protein sequence ID" value="AT5G19890.1"/>
    <property type="gene ID" value="AT5G19890"/>
</dbReference>
<dbReference type="KEGG" id="ath:AT5G19890"/>
<dbReference type="Araport" id="AT5G19890"/>
<dbReference type="TAIR" id="AT5G19890"/>
<dbReference type="eggNOG" id="ENOG502QQQJ">
    <property type="taxonomic scope" value="Eukaryota"/>
</dbReference>
<dbReference type="HOGENOM" id="CLU_010543_0_3_1"/>
<dbReference type="InParanoid" id="Q39034"/>
<dbReference type="OMA" id="NICPEVV"/>
<dbReference type="PhylomeDB" id="Q39034"/>
<dbReference type="BioCyc" id="ARA:AT5G19890-MONOMER"/>
<dbReference type="EvolutionaryTrace" id="Q39034"/>
<dbReference type="PRO" id="PR:Q39034"/>
<dbReference type="Proteomes" id="UP000006548">
    <property type="component" value="Chromosome 5"/>
</dbReference>
<dbReference type="ExpressionAtlas" id="Q39034">
    <property type="expression patterns" value="baseline and differential"/>
</dbReference>
<dbReference type="GO" id="GO:0005737">
    <property type="term" value="C:cytoplasm"/>
    <property type="evidence" value="ECO:0007005"/>
    <property type="project" value="TAIR"/>
</dbReference>
<dbReference type="GO" id="GO:0005576">
    <property type="term" value="C:extracellular region"/>
    <property type="evidence" value="ECO:0007669"/>
    <property type="project" value="UniProtKB-SubCell"/>
</dbReference>
<dbReference type="GO" id="GO:0005634">
    <property type="term" value="C:nucleus"/>
    <property type="evidence" value="ECO:0007005"/>
    <property type="project" value="TAIR"/>
</dbReference>
<dbReference type="GO" id="GO:0020037">
    <property type="term" value="F:heme binding"/>
    <property type="evidence" value="ECO:0007669"/>
    <property type="project" value="InterPro"/>
</dbReference>
<dbReference type="GO" id="GO:0140825">
    <property type="term" value="F:lactoperoxidase activity"/>
    <property type="evidence" value="ECO:0007669"/>
    <property type="project" value="UniProtKB-EC"/>
</dbReference>
<dbReference type="GO" id="GO:0046872">
    <property type="term" value="F:metal ion binding"/>
    <property type="evidence" value="ECO:0007669"/>
    <property type="project" value="UniProtKB-KW"/>
</dbReference>
<dbReference type="GO" id="GO:0042744">
    <property type="term" value="P:hydrogen peroxide catabolic process"/>
    <property type="evidence" value="ECO:0007669"/>
    <property type="project" value="UniProtKB-KW"/>
</dbReference>
<dbReference type="GO" id="GO:0006979">
    <property type="term" value="P:response to oxidative stress"/>
    <property type="evidence" value="ECO:0007669"/>
    <property type="project" value="InterPro"/>
</dbReference>
<dbReference type="CDD" id="cd00693">
    <property type="entry name" value="secretory_peroxidase"/>
    <property type="match status" value="1"/>
</dbReference>
<dbReference type="FunFam" id="1.10.420.10:FF:000001">
    <property type="entry name" value="Peroxidase"/>
    <property type="match status" value="1"/>
</dbReference>
<dbReference type="FunFam" id="1.10.520.10:FF:000009">
    <property type="entry name" value="Peroxidase"/>
    <property type="match status" value="1"/>
</dbReference>
<dbReference type="Gene3D" id="1.10.520.10">
    <property type="match status" value="1"/>
</dbReference>
<dbReference type="Gene3D" id="1.10.420.10">
    <property type="entry name" value="Peroxidase, domain 2"/>
    <property type="match status" value="1"/>
</dbReference>
<dbReference type="InterPro" id="IPR002016">
    <property type="entry name" value="Haem_peroxidase"/>
</dbReference>
<dbReference type="InterPro" id="IPR010255">
    <property type="entry name" value="Haem_peroxidase_sf"/>
</dbReference>
<dbReference type="InterPro" id="IPR000823">
    <property type="entry name" value="Peroxidase_pln"/>
</dbReference>
<dbReference type="InterPro" id="IPR019794">
    <property type="entry name" value="Peroxidases_AS"/>
</dbReference>
<dbReference type="InterPro" id="IPR019793">
    <property type="entry name" value="Peroxidases_heam-ligand_BS"/>
</dbReference>
<dbReference type="InterPro" id="IPR033905">
    <property type="entry name" value="Secretory_peroxidase"/>
</dbReference>
<dbReference type="PANTHER" id="PTHR31388:SF264">
    <property type="entry name" value="PEROXIDASE 59"/>
    <property type="match status" value="1"/>
</dbReference>
<dbReference type="PANTHER" id="PTHR31388">
    <property type="entry name" value="PEROXIDASE 72-RELATED"/>
    <property type="match status" value="1"/>
</dbReference>
<dbReference type="Pfam" id="PF00141">
    <property type="entry name" value="peroxidase"/>
    <property type="match status" value="1"/>
</dbReference>
<dbReference type="PRINTS" id="PR00458">
    <property type="entry name" value="PEROXIDASE"/>
</dbReference>
<dbReference type="PRINTS" id="PR00461">
    <property type="entry name" value="PLPEROXIDASE"/>
</dbReference>
<dbReference type="SUPFAM" id="SSF48113">
    <property type="entry name" value="Heme-dependent peroxidases"/>
    <property type="match status" value="1"/>
</dbReference>
<dbReference type="PROSITE" id="PS00435">
    <property type="entry name" value="PEROXIDASE_1"/>
    <property type="match status" value="1"/>
</dbReference>
<dbReference type="PROSITE" id="PS00436">
    <property type="entry name" value="PEROXIDASE_2"/>
    <property type="match status" value="1"/>
</dbReference>
<dbReference type="PROSITE" id="PS50873">
    <property type="entry name" value="PEROXIDASE_4"/>
    <property type="match status" value="1"/>
</dbReference>
<sequence>MKTQTKVMGGHVLLTVFTLCMLCSGVRAQLSPDIYAKSCPNLVQIVRKQVAIALKAEIRMAASLIRLHFHDCFVNGCDASLLLDGADSEKLAIPNINSARGFEVIDTIKAAVENACPGVVSCADILTLAARDSVVLSGGPGWRVALGRKDGLVANQNSANNLPSPFEPLDAIIAKFVAVNLNITDVVALSGAHTFGQAKCAVFSNRLFNFTGLGNPDATLETSLLSNLQTVCPLGGNSNITAPLDRSTTDTFDNNYFKNLLEGKGLLSSDQILFSSDLAVNTTKKLVEAYSRSQSLFFRDFTCAMIRMGNISNGASGEVRTNCRVINN</sequence>
<proteinExistence type="evidence at protein level"/>
<protein>
    <recommendedName>
        <fullName>Peroxidase 59</fullName>
        <shortName>Atperox P59</shortName>
        <ecNumber>1.11.1.7</ecNumber>
    </recommendedName>
    <alternativeName>
        <fullName>ATPN</fullName>
    </alternativeName>
    <alternativeName>
        <fullName>Peroxidase N</fullName>
    </alternativeName>
</protein>
<gene>
    <name type="primary">PER59</name>
    <name type="synonym">P59</name>
    <name type="ordered locus">At5g19890</name>
    <name type="ORF">F28I16.40</name>
</gene>
<accession>Q39034</accession>
<name>PER59_ARATH</name>
<reference key="1">
    <citation type="submission" date="1996-06" db="EMBL/GenBank/DDBJ databases">
        <title>Sequence analysis and expression of two peroxidase encoding mRNAs from Arabidopsis thaliana.</title>
        <authorList>
            <person name="Oestergaard L."/>
            <person name="Welinder K.G."/>
        </authorList>
    </citation>
    <scope>NUCLEOTIDE SEQUENCE [MRNA]</scope>
    <source>
        <strain>cv. Columbia</strain>
    </source>
</reference>
<reference key="2">
    <citation type="journal article" date="2000" name="Nature">
        <title>Sequence and analysis of chromosome 5 of the plant Arabidopsis thaliana.</title>
        <authorList>
            <person name="Tabata S."/>
            <person name="Kaneko T."/>
            <person name="Nakamura Y."/>
            <person name="Kotani H."/>
            <person name="Kato T."/>
            <person name="Asamizu E."/>
            <person name="Miyajima N."/>
            <person name="Sasamoto S."/>
            <person name="Kimura T."/>
            <person name="Hosouchi T."/>
            <person name="Kawashima K."/>
            <person name="Kohara M."/>
            <person name="Matsumoto M."/>
            <person name="Matsuno A."/>
            <person name="Muraki A."/>
            <person name="Nakayama S."/>
            <person name="Nakazaki N."/>
            <person name="Naruo K."/>
            <person name="Okumura S."/>
            <person name="Shinpo S."/>
            <person name="Takeuchi C."/>
            <person name="Wada T."/>
            <person name="Watanabe A."/>
            <person name="Yamada M."/>
            <person name="Yasuda M."/>
            <person name="Sato S."/>
            <person name="de la Bastide M."/>
            <person name="Huang E."/>
            <person name="Spiegel L."/>
            <person name="Gnoj L."/>
            <person name="O'Shaughnessy A."/>
            <person name="Preston R."/>
            <person name="Habermann K."/>
            <person name="Murray J."/>
            <person name="Johnson D."/>
            <person name="Rohlfing T."/>
            <person name="Nelson J."/>
            <person name="Stoneking T."/>
            <person name="Pepin K."/>
            <person name="Spieth J."/>
            <person name="Sekhon M."/>
            <person name="Armstrong J."/>
            <person name="Becker M."/>
            <person name="Belter E."/>
            <person name="Cordum H."/>
            <person name="Cordes M."/>
            <person name="Courtney L."/>
            <person name="Courtney W."/>
            <person name="Dante M."/>
            <person name="Du H."/>
            <person name="Edwards J."/>
            <person name="Fryman J."/>
            <person name="Haakensen B."/>
            <person name="Lamar E."/>
            <person name="Latreille P."/>
            <person name="Leonard S."/>
            <person name="Meyer R."/>
            <person name="Mulvaney E."/>
            <person name="Ozersky P."/>
            <person name="Riley A."/>
            <person name="Strowmatt C."/>
            <person name="Wagner-McPherson C."/>
            <person name="Wollam A."/>
            <person name="Yoakum M."/>
            <person name="Bell M."/>
            <person name="Dedhia N."/>
            <person name="Parnell L."/>
            <person name="Shah R."/>
            <person name="Rodriguez M."/>
            <person name="Hoon See L."/>
            <person name="Vil D."/>
            <person name="Baker J."/>
            <person name="Kirchoff K."/>
            <person name="Toth K."/>
            <person name="King L."/>
            <person name="Bahret A."/>
            <person name="Miller B."/>
            <person name="Marra M.A."/>
            <person name="Martienssen R."/>
            <person name="McCombie W.R."/>
            <person name="Wilson R.K."/>
            <person name="Murphy G."/>
            <person name="Bancroft I."/>
            <person name="Volckaert G."/>
            <person name="Wambutt R."/>
            <person name="Duesterhoeft A."/>
            <person name="Stiekema W."/>
            <person name="Pohl T."/>
            <person name="Entian K.-D."/>
            <person name="Terryn N."/>
            <person name="Hartley N."/>
            <person name="Bent E."/>
            <person name="Johnson S."/>
            <person name="Langham S.-A."/>
            <person name="McCullagh B."/>
            <person name="Robben J."/>
            <person name="Grymonprez B."/>
            <person name="Zimmermann W."/>
            <person name="Ramsperger U."/>
            <person name="Wedler H."/>
            <person name="Balke K."/>
            <person name="Wedler E."/>
            <person name="Peters S."/>
            <person name="van Staveren M."/>
            <person name="Dirkse W."/>
            <person name="Mooijman P."/>
            <person name="Klein Lankhorst R."/>
            <person name="Weitzenegger T."/>
            <person name="Bothe G."/>
            <person name="Rose M."/>
            <person name="Hauf J."/>
            <person name="Berneiser S."/>
            <person name="Hempel S."/>
            <person name="Feldpausch M."/>
            <person name="Lamberth S."/>
            <person name="Villarroel R."/>
            <person name="Gielen J."/>
            <person name="Ardiles W."/>
            <person name="Bents O."/>
            <person name="Lemcke K."/>
            <person name="Kolesov G."/>
            <person name="Mayer K.F.X."/>
            <person name="Rudd S."/>
            <person name="Schoof H."/>
            <person name="Schueller C."/>
            <person name="Zaccaria P."/>
            <person name="Mewes H.-W."/>
            <person name="Bevan M."/>
            <person name="Fransz P.F."/>
        </authorList>
    </citation>
    <scope>NUCLEOTIDE SEQUENCE [LARGE SCALE GENOMIC DNA]</scope>
    <source>
        <strain>cv. Columbia</strain>
    </source>
</reference>
<reference key="3">
    <citation type="journal article" date="2017" name="Plant J.">
        <title>Araport11: a complete reannotation of the Arabidopsis thaliana reference genome.</title>
        <authorList>
            <person name="Cheng C.Y."/>
            <person name="Krishnakumar V."/>
            <person name="Chan A.P."/>
            <person name="Thibaud-Nissen F."/>
            <person name="Schobel S."/>
            <person name="Town C.D."/>
        </authorList>
    </citation>
    <scope>GENOME REANNOTATION</scope>
    <source>
        <strain>cv. Columbia</strain>
    </source>
</reference>
<reference key="4">
    <citation type="journal article" date="2003" name="Science">
        <title>Empirical analysis of transcriptional activity in the Arabidopsis genome.</title>
        <authorList>
            <person name="Yamada K."/>
            <person name="Lim J."/>
            <person name="Dale J.M."/>
            <person name="Chen H."/>
            <person name="Shinn P."/>
            <person name="Palm C.J."/>
            <person name="Southwick A.M."/>
            <person name="Wu H.C."/>
            <person name="Kim C.J."/>
            <person name="Nguyen M."/>
            <person name="Pham P.K."/>
            <person name="Cheuk R.F."/>
            <person name="Karlin-Newmann G."/>
            <person name="Liu S.X."/>
            <person name="Lam B."/>
            <person name="Sakano H."/>
            <person name="Wu T."/>
            <person name="Yu G."/>
            <person name="Miranda M."/>
            <person name="Quach H.L."/>
            <person name="Tripp M."/>
            <person name="Chang C.H."/>
            <person name="Lee J.M."/>
            <person name="Toriumi M.J."/>
            <person name="Chan M.M."/>
            <person name="Tang C.C."/>
            <person name="Onodera C.S."/>
            <person name="Deng J.M."/>
            <person name="Akiyama K."/>
            <person name="Ansari Y."/>
            <person name="Arakawa T."/>
            <person name="Banh J."/>
            <person name="Banno F."/>
            <person name="Bowser L."/>
            <person name="Brooks S.Y."/>
            <person name="Carninci P."/>
            <person name="Chao Q."/>
            <person name="Choy N."/>
            <person name="Enju A."/>
            <person name="Goldsmith A.D."/>
            <person name="Gurjal M."/>
            <person name="Hansen N.F."/>
            <person name="Hayashizaki Y."/>
            <person name="Johnson-Hopson C."/>
            <person name="Hsuan V.W."/>
            <person name="Iida K."/>
            <person name="Karnes M."/>
            <person name="Khan S."/>
            <person name="Koesema E."/>
            <person name="Ishida J."/>
            <person name="Jiang P.X."/>
            <person name="Jones T."/>
            <person name="Kawai J."/>
            <person name="Kamiya A."/>
            <person name="Meyers C."/>
            <person name="Nakajima M."/>
            <person name="Narusaka M."/>
            <person name="Seki M."/>
            <person name="Sakurai T."/>
            <person name="Satou M."/>
            <person name="Tamse R."/>
            <person name="Vaysberg M."/>
            <person name="Wallender E.K."/>
            <person name="Wong C."/>
            <person name="Yamamura Y."/>
            <person name="Yuan S."/>
            <person name="Shinozaki K."/>
            <person name="Davis R.W."/>
            <person name="Theologis A."/>
            <person name="Ecker J.R."/>
        </authorList>
    </citation>
    <scope>NUCLEOTIDE SEQUENCE [LARGE SCALE MRNA]</scope>
    <source>
        <strain>cv. Columbia</strain>
    </source>
</reference>
<reference key="5">
    <citation type="submission" date="2002-03" db="EMBL/GenBank/DDBJ databases">
        <title>Full-length cDNA from Arabidopsis thaliana.</title>
        <authorList>
            <person name="Brover V.V."/>
            <person name="Troukhan M.E."/>
            <person name="Alexandrov N.A."/>
            <person name="Lu Y.-P."/>
            <person name="Flavell R.B."/>
            <person name="Feldmann K.A."/>
        </authorList>
    </citation>
    <scope>NUCLEOTIDE SEQUENCE [LARGE SCALE MRNA]</scope>
</reference>
<reference key="6">
    <citation type="journal article" date="1998" name="FEBS Lett.">
        <title>Computational analyses and annotations of the Arabidopsis peroxidase gene family.</title>
        <authorList>
            <person name="Oestergaard L."/>
            <person name="Pedersen A.G."/>
            <person name="Jespersen H.M."/>
            <person name="Brunak S."/>
            <person name="Welinder K.G."/>
        </authorList>
    </citation>
    <scope>CHARACTERIZATION</scope>
    <source>
        <strain>cv. Columbia</strain>
    </source>
</reference>
<reference key="7">
    <citation type="journal article" date="2000" name="Acta Crystallogr. D">
        <title>Arabidopsis thaliana peroxidase N: structure of a novel neutral peroxidase.</title>
        <authorList>
            <person name="Mirza O."/>
            <person name="Henriksen A."/>
            <person name="Oestergaard L."/>
            <person name="Welinder K.G."/>
            <person name="Gajhede M."/>
        </authorList>
    </citation>
    <scope>X-RAY CRYSTALLOGRAPHY (1.9 ANGSTROMS) IN COMPLEX WITH CALCIUM AND HEME</scope>
    <scope>DISULFIDE BONDS</scope>
    <source>
        <strain>cv. Columbia</strain>
    </source>
</reference>
<reference key="8">
    <citation type="journal article" date="2002" name="Gene">
        <title>Analysis and expression of the class III peroxidase large gene family in Arabidopsis thaliana.</title>
        <authorList>
            <person name="Tognolli M."/>
            <person name="Penel C."/>
            <person name="Greppin H."/>
            <person name="Simon P."/>
        </authorList>
    </citation>
    <scope>GENE FAMILY ORGANIZATION</scope>
    <scope>NOMENCLATURE</scope>
    <source>
        <strain>cv. Columbia</strain>
    </source>
</reference>